<organism>
    <name type="scientific">Escherichia coli O127:H6 (strain E2348/69 / EPEC)</name>
    <dbReference type="NCBI Taxonomy" id="574521"/>
    <lineage>
        <taxon>Bacteria</taxon>
        <taxon>Pseudomonadati</taxon>
        <taxon>Pseudomonadota</taxon>
        <taxon>Gammaproteobacteria</taxon>
        <taxon>Enterobacterales</taxon>
        <taxon>Enterobacteriaceae</taxon>
        <taxon>Escherichia</taxon>
    </lineage>
</organism>
<name>FABZ_ECO27</name>
<sequence length="151" mass="17033">MTTNTHTLQIEEILELLPHRFPFLLVDRVLDFEEGRFLRAVKNVSVNEPFFQGHFPGKPIFPGVLILEAMAQATGILAFKSVGKLEPGELYYFAGIDEARFKRPVVPGDQMIMEVTFEKTRRGLTRFKGVALVDGKVVCEATMMCARSREA</sequence>
<keyword id="KW-0963">Cytoplasm</keyword>
<keyword id="KW-0441">Lipid A biosynthesis</keyword>
<keyword id="KW-0444">Lipid biosynthesis</keyword>
<keyword id="KW-0443">Lipid metabolism</keyword>
<keyword id="KW-0456">Lyase</keyword>
<keyword id="KW-1185">Reference proteome</keyword>
<reference key="1">
    <citation type="journal article" date="2009" name="J. Bacteriol.">
        <title>Complete genome sequence and comparative genome analysis of enteropathogenic Escherichia coli O127:H6 strain E2348/69.</title>
        <authorList>
            <person name="Iguchi A."/>
            <person name="Thomson N.R."/>
            <person name="Ogura Y."/>
            <person name="Saunders D."/>
            <person name="Ooka T."/>
            <person name="Henderson I.R."/>
            <person name="Harris D."/>
            <person name="Asadulghani M."/>
            <person name="Kurokawa K."/>
            <person name="Dean P."/>
            <person name="Kenny B."/>
            <person name="Quail M.A."/>
            <person name="Thurston S."/>
            <person name="Dougan G."/>
            <person name="Hayashi T."/>
            <person name="Parkhill J."/>
            <person name="Frankel G."/>
        </authorList>
    </citation>
    <scope>NUCLEOTIDE SEQUENCE [LARGE SCALE GENOMIC DNA]</scope>
    <source>
        <strain>E2348/69 / EPEC</strain>
    </source>
</reference>
<dbReference type="EC" id="4.2.1.59" evidence="1"/>
<dbReference type="EMBL" id="FM180568">
    <property type="protein sequence ID" value="CAS07733.1"/>
    <property type="molecule type" value="Genomic_DNA"/>
</dbReference>
<dbReference type="RefSeq" id="WP_000210739.1">
    <property type="nucleotide sequence ID" value="NC_011601.1"/>
</dbReference>
<dbReference type="SMR" id="B7UJ81"/>
<dbReference type="GeneID" id="93777245"/>
<dbReference type="KEGG" id="ecg:E2348C_0185"/>
<dbReference type="HOGENOM" id="CLU_078912_1_0_6"/>
<dbReference type="Proteomes" id="UP000008205">
    <property type="component" value="Chromosome"/>
</dbReference>
<dbReference type="GO" id="GO:0005737">
    <property type="term" value="C:cytoplasm"/>
    <property type="evidence" value="ECO:0007669"/>
    <property type="project" value="UniProtKB-SubCell"/>
</dbReference>
<dbReference type="GO" id="GO:0016020">
    <property type="term" value="C:membrane"/>
    <property type="evidence" value="ECO:0007669"/>
    <property type="project" value="GOC"/>
</dbReference>
<dbReference type="GO" id="GO:0019171">
    <property type="term" value="F:(3R)-hydroxyacyl-[acyl-carrier-protein] dehydratase activity"/>
    <property type="evidence" value="ECO:0007669"/>
    <property type="project" value="UniProtKB-EC"/>
</dbReference>
<dbReference type="GO" id="GO:0006633">
    <property type="term" value="P:fatty acid biosynthetic process"/>
    <property type="evidence" value="ECO:0007669"/>
    <property type="project" value="UniProtKB-UniRule"/>
</dbReference>
<dbReference type="GO" id="GO:0009245">
    <property type="term" value="P:lipid A biosynthetic process"/>
    <property type="evidence" value="ECO:0007669"/>
    <property type="project" value="UniProtKB-UniRule"/>
</dbReference>
<dbReference type="CDD" id="cd01288">
    <property type="entry name" value="FabZ"/>
    <property type="match status" value="1"/>
</dbReference>
<dbReference type="FunFam" id="3.10.129.10:FF:000001">
    <property type="entry name" value="3-hydroxyacyl-[acyl-carrier-protein] dehydratase FabZ"/>
    <property type="match status" value="1"/>
</dbReference>
<dbReference type="Gene3D" id="3.10.129.10">
    <property type="entry name" value="Hotdog Thioesterase"/>
    <property type="match status" value="1"/>
</dbReference>
<dbReference type="HAMAP" id="MF_00406">
    <property type="entry name" value="FabZ"/>
    <property type="match status" value="1"/>
</dbReference>
<dbReference type="InterPro" id="IPR013114">
    <property type="entry name" value="FabA_FabZ"/>
</dbReference>
<dbReference type="InterPro" id="IPR010084">
    <property type="entry name" value="FabZ"/>
</dbReference>
<dbReference type="InterPro" id="IPR029069">
    <property type="entry name" value="HotDog_dom_sf"/>
</dbReference>
<dbReference type="NCBIfam" id="TIGR01750">
    <property type="entry name" value="fabZ"/>
    <property type="match status" value="1"/>
</dbReference>
<dbReference type="NCBIfam" id="NF000582">
    <property type="entry name" value="PRK00006.1"/>
    <property type="match status" value="1"/>
</dbReference>
<dbReference type="PANTHER" id="PTHR30272">
    <property type="entry name" value="3-HYDROXYACYL-[ACYL-CARRIER-PROTEIN] DEHYDRATASE"/>
    <property type="match status" value="1"/>
</dbReference>
<dbReference type="PANTHER" id="PTHR30272:SF1">
    <property type="entry name" value="3-HYDROXYACYL-[ACYL-CARRIER-PROTEIN] DEHYDRATASE"/>
    <property type="match status" value="1"/>
</dbReference>
<dbReference type="Pfam" id="PF07977">
    <property type="entry name" value="FabA"/>
    <property type="match status" value="1"/>
</dbReference>
<dbReference type="SUPFAM" id="SSF54637">
    <property type="entry name" value="Thioesterase/thiol ester dehydrase-isomerase"/>
    <property type="match status" value="1"/>
</dbReference>
<evidence type="ECO:0000255" key="1">
    <source>
        <dbReference type="HAMAP-Rule" id="MF_00406"/>
    </source>
</evidence>
<proteinExistence type="inferred from homology"/>
<accession>B7UJ81</accession>
<protein>
    <recommendedName>
        <fullName evidence="1">3-hydroxyacyl-[acyl-carrier-protein] dehydratase FabZ</fullName>
        <ecNumber evidence="1">4.2.1.59</ecNumber>
    </recommendedName>
    <alternativeName>
        <fullName evidence="1">(3R)-hydroxymyristoyl-[acyl-carrier-protein] dehydratase</fullName>
        <shortName evidence="1">(3R)-hydroxymyristoyl-ACP dehydrase</shortName>
    </alternativeName>
    <alternativeName>
        <fullName evidence="1">Beta-hydroxyacyl-ACP dehydratase</fullName>
    </alternativeName>
</protein>
<comment type="function">
    <text evidence="1">Involved in unsaturated fatty acids biosynthesis. Catalyzes the dehydration of short chain beta-hydroxyacyl-ACPs and long chain saturated and unsaturated beta-hydroxyacyl-ACPs.</text>
</comment>
<comment type="catalytic activity">
    <reaction evidence="1">
        <text>a (3R)-hydroxyacyl-[ACP] = a (2E)-enoyl-[ACP] + H2O</text>
        <dbReference type="Rhea" id="RHEA:13097"/>
        <dbReference type="Rhea" id="RHEA-COMP:9925"/>
        <dbReference type="Rhea" id="RHEA-COMP:9945"/>
        <dbReference type="ChEBI" id="CHEBI:15377"/>
        <dbReference type="ChEBI" id="CHEBI:78784"/>
        <dbReference type="ChEBI" id="CHEBI:78827"/>
        <dbReference type="EC" id="4.2.1.59"/>
    </reaction>
</comment>
<comment type="subunit">
    <text evidence="1">Oligomer.</text>
</comment>
<comment type="subcellular location">
    <subcellularLocation>
        <location evidence="1">Cytoplasm</location>
    </subcellularLocation>
</comment>
<comment type="PTM">
    <text evidence="1">The N-terminus is blocked.</text>
</comment>
<comment type="similarity">
    <text evidence="1">Belongs to the thioester dehydratase family. FabZ subfamily.</text>
</comment>
<feature type="chain" id="PRO_1000134699" description="3-hydroxyacyl-[acyl-carrier-protein] dehydratase FabZ">
    <location>
        <begin position="1"/>
        <end position="151"/>
    </location>
</feature>
<feature type="active site" evidence="1">
    <location>
        <position position="54"/>
    </location>
</feature>
<gene>
    <name evidence="1" type="primary">fabZ</name>
    <name type="ordered locus">E2348C_0185</name>
</gene>